<reference key="1">
    <citation type="journal article" date="2005" name="Nature">
        <title>The genome sequence of the rice blast fungus Magnaporthe grisea.</title>
        <authorList>
            <person name="Dean R.A."/>
            <person name="Talbot N.J."/>
            <person name="Ebbole D.J."/>
            <person name="Farman M.L."/>
            <person name="Mitchell T.K."/>
            <person name="Orbach M.J."/>
            <person name="Thon M.R."/>
            <person name="Kulkarni R."/>
            <person name="Xu J.-R."/>
            <person name="Pan H."/>
            <person name="Read N.D."/>
            <person name="Lee Y.-H."/>
            <person name="Carbone I."/>
            <person name="Brown D."/>
            <person name="Oh Y.Y."/>
            <person name="Donofrio N."/>
            <person name="Jeong J.S."/>
            <person name="Soanes D.M."/>
            <person name="Djonovic S."/>
            <person name="Kolomiets E."/>
            <person name="Rehmeyer C."/>
            <person name="Li W."/>
            <person name="Harding M."/>
            <person name="Kim S."/>
            <person name="Lebrun M.-H."/>
            <person name="Bohnert H."/>
            <person name="Coughlan S."/>
            <person name="Butler J."/>
            <person name="Calvo S.E."/>
            <person name="Ma L.-J."/>
            <person name="Nicol R."/>
            <person name="Purcell S."/>
            <person name="Nusbaum C."/>
            <person name="Galagan J.E."/>
            <person name="Birren B.W."/>
        </authorList>
    </citation>
    <scope>NUCLEOTIDE SEQUENCE [LARGE SCALE GENOMIC DNA]</scope>
    <source>
        <strain>70-15 / ATCC MYA-4617 / FGSC 8958</strain>
    </source>
</reference>
<reference key="2">
    <citation type="journal article" date="2024" name="PLoS Pathog.">
        <title>The bZIP transcription factor BIP1 of the rice blast fungus is essential for infection and regulates a specific set of appressorium genes.</title>
        <authorList>
            <person name="Lambou K."/>
            <person name="Tag A."/>
            <person name="Lassagne A."/>
            <person name="Collemare J."/>
            <person name="Clergeot P.H."/>
            <person name="Barbisan C."/>
            <person name="Perret P."/>
            <person name="Tharreau D."/>
            <person name="Millazo J."/>
            <person name="Chartier E."/>
            <person name="De Vries R.P."/>
            <person name="Hirsch J."/>
            <person name="Morel J.B."/>
            <person name="Beffa R."/>
            <person name="Kroj T."/>
            <person name="Thomas T."/>
            <person name="Lebrun M.H."/>
        </authorList>
    </citation>
    <scope>FUNCTION</scope>
    <scope>DISRUPTION PHENOTYPE</scope>
    <scope>TISSUE SPECIFICITY</scope>
    <scope>SUBCELLULAR LOCATION</scope>
</reference>
<feature type="chain" id="PRO_0000461565" description="Transcription factor BIP1">
    <location>
        <begin position="1"/>
        <end position="266"/>
    </location>
</feature>
<feature type="domain" description="bZIP" evidence="1">
    <location>
        <begin position="54"/>
        <end position="95"/>
    </location>
</feature>
<feature type="region of interest" description="Disordered" evidence="2">
    <location>
        <begin position="1"/>
        <end position="73"/>
    </location>
</feature>
<feature type="region of interest" description="Basic motif" evidence="1">
    <location>
        <begin position="59"/>
        <end position="81"/>
    </location>
</feature>
<feature type="region of interest" description="Leucine-zipper" evidence="1">
    <location>
        <begin position="82"/>
        <end position="89"/>
    </location>
</feature>
<feature type="compositionally biased region" description="Polar residues" evidence="2">
    <location>
        <begin position="7"/>
        <end position="22"/>
    </location>
</feature>
<feature type="compositionally biased region" description="Polar residues" evidence="2">
    <location>
        <begin position="47"/>
        <end position="56"/>
    </location>
</feature>
<feature type="compositionally biased region" description="Basic and acidic residues" evidence="2">
    <location>
        <begin position="61"/>
        <end position="73"/>
    </location>
</feature>
<accession>G4MYD3</accession>
<gene>
    <name evidence="4" type="primary">BIP1</name>
    <name type="ORF">MGG_08118</name>
</gene>
<sequence length="266" mass="29542">MAMYMPSTASSTTHIRSPSGTPIDSPHEMTRSPSAEPSKPAKRKGTRSVSTLTPSQLARKRANDREAQRAIRARTKEHIERLEREVEELKSKQNRDETLQELIRKNKYLEKEIARLRETYGIPTPPTSHPYAPSIYDDSAVSSRTSSSFGQHSPDYHQVGEYGASYMTTPEPSEPWTSVLPCSNVSSPASSGSAEEYGYIPTSVPAGIEGLPPTSRVGACMKYEDMDNENGYPRSNGVPMPPTYMHQQQWPVPYSATVYYPQSPAL</sequence>
<comment type="function">
    <text evidence="3">Transcription factor that is required for infection of plants hosts (PubMed:38252628). Is not implicated in the development of appressoria or the subsequent penetration of host leaves, but is necessary for the initial establishment of the fungus within plant cells by orchestrating the expression of a unique set of early invasion-related genes within appressoria, encoding secreted effectors, enzymes, secondary metabolism-related enzymes, and signaling membrane receptors (PubMed:38252628). Controls the expression of targeted genes by interacting directly with a 5'-TGACTC-3' motif present in their promoters (PubMed:38252628).</text>
</comment>
<comment type="subcellular location">
    <subcellularLocation>
        <location evidence="1 3">Nucleus</location>
    </subcellularLocation>
</comment>
<comment type="tissue specificity">
    <text evidence="3">Expressed in appressoria.</text>
</comment>
<comment type="disruption phenotype">
    <text evidence="3">Impairs pathogenicity on barley and rice plants, as well as on detached barley leaves (PubMed:38252628). Does not affect the differentiation, turgor build-up and maturation of appressoria but impairs the formation of invasive infection hyphae and completely abolishes the ability to penetrate into barley and rice epidermal cells (PubMed:38252628). Has no effect on conidiation, mycelial growth nor resistance to cell wall and oxidative stress (PubMed:38252628).</text>
</comment>
<comment type="similarity">
    <text evidence="5">Belongs to the bZIP family.</text>
</comment>
<keyword id="KW-0238">DNA-binding</keyword>
<keyword id="KW-0539">Nucleus</keyword>
<keyword id="KW-1185">Reference proteome</keyword>
<keyword id="KW-0804">Transcription</keyword>
<keyword id="KW-0805">Transcription regulation</keyword>
<keyword id="KW-0843">Virulence</keyword>
<evidence type="ECO:0000255" key="1">
    <source>
        <dbReference type="PROSITE-ProRule" id="PRU00978"/>
    </source>
</evidence>
<evidence type="ECO:0000256" key="2">
    <source>
        <dbReference type="SAM" id="MobiDB-lite"/>
    </source>
</evidence>
<evidence type="ECO:0000269" key="3">
    <source>
    </source>
</evidence>
<evidence type="ECO:0000303" key="4">
    <source>
    </source>
</evidence>
<evidence type="ECO:0000305" key="5"/>
<proteinExistence type="evidence at transcript level"/>
<protein>
    <recommendedName>
        <fullName evidence="4">Transcription factor BIP1</fullName>
    </recommendedName>
    <alternativeName>
        <fullName evidence="4">bZIP TF involved in pathogenesis-1</fullName>
    </alternativeName>
</protein>
<dbReference type="EMBL" id="CM001232">
    <property type="protein sequence ID" value="EHA55268.1"/>
    <property type="molecule type" value="Genomic_DNA"/>
</dbReference>
<dbReference type="RefSeq" id="XP_003715075.1">
    <property type="nucleotide sequence ID" value="XM_003715027.1"/>
</dbReference>
<dbReference type="SMR" id="G4MYD3"/>
<dbReference type="STRING" id="242507.G4MYD3"/>
<dbReference type="EnsemblFungi" id="MGG_08118T0">
    <property type="protein sequence ID" value="MGG_08118T0"/>
    <property type="gene ID" value="MGG_08118"/>
</dbReference>
<dbReference type="GeneID" id="2678400"/>
<dbReference type="KEGG" id="mgr:MGG_08118"/>
<dbReference type="VEuPathDB" id="FungiDB:MGG_08118"/>
<dbReference type="eggNOG" id="ENOG502SU86">
    <property type="taxonomic scope" value="Eukaryota"/>
</dbReference>
<dbReference type="HOGENOM" id="CLU_079681_0_0_1"/>
<dbReference type="InParanoid" id="G4MYD3"/>
<dbReference type="OMA" id="AQQSYGH"/>
<dbReference type="OrthoDB" id="3535998at2759"/>
<dbReference type="Proteomes" id="UP000009058">
    <property type="component" value="Chromosome 2"/>
</dbReference>
<dbReference type="GO" id="GO:0005634">
    <property type="term" value="C:nucleus"/>
    <property type="evidence" value="ECO:0007669"/>
    <property type="project" value="UniProtKB-SubCell"/>
</dbReference>
<dbReference type="GO" id="GO:0003677">
    <property type="term" value="F:DNA binding"/>
    <property type="evidence" value="ECO:0007669"/>
    <property type="project" value="UniProtKB-KW"/>
</dbReference>
<dbReference type="CDD" id="cd14688">
    <property type="entry name" value="bZIP_YAP"/>
    <property type="match status" value="1"/>
</dbReference>
<dbReference type="Gene3D" id="1.20.5.170">
    <property type="match status" value="1"/>
</dbReference>
<dbReference type="PANTHER" id="PTHR37012">
    <property type="entry name" value="B-ZIP TRANSCRIPTION FACTOR (EUROFUNG)-RELATED"/>
    <property type="match status" value="1"/>
</dbReference>
<dbReference type="PANTHER" id="PTHR37012:SF2">
    <property type="entry name" value="BZIP DOMAIN-CONTAINING PROTEIN-RELATED"/>
    <property type="match status" value="1"/>
</dbReference>
<organism>
    <name type="scientific">Pyricularia oryzae (strain 70-15 / ATCC MYA-4617 / FGSC 8958)</name>
    <name type="common">Rice blast fungus</name>
    <name type="synonym">Magnaporthe oryzae</name>
    <dbReference type="NCBI Taxonomy" id="242507"/>
    <lineage>
        <taxon>Eukaryota</taxon>
        <taxon>Fungi</taxon>
        <taxon>Dikarya</taxon>
        <taxon>Ascomycota</taxon>
        <taxon>Pezizomycotina</taxon>
        <taxon>Sordariomycetes</taxon>
        <taxon>Sordariomycetidae</taxon>
        <taxon>Magnaporthales</taxon>
        <taxon>Pyriculariaceae</taxon>
        <taxon>Pyricularia</taxon>
    </lineage>
</organism>
<name>BIP1_PYRO7</name>